<protein>
    <recommendedName>
        <fullName evidence="1">Large ribosomal subunit protein bL20</fullName>
    </recommendedName>
    <alternativeName>
        <fullName evidence="2">50S ribosomal protein L20</fullName>
    </alternativeName>
</protein>
<feature type="chain" id="PRO_1000049103" description="Large ribosomal subunit protein bL20">
    <location>
        <begin position="1"/>
        <end position="118"/>
    </location>
</feature>
<sequence>MARVKRGVIARARHKKILKQAKGYYGARSRVYRVAFQAVIKAGQYAYRDRRQRKRQFRQLWIARINAAARQNGLSYSRFINGLKKASVEIDRKILADIAVFDKVAFSALVEKAKAALA</sequence>
<comment type="function">
    <text evidence="1">Binds directly to 23S ribosomal RNA and is necessary for the in vitro assembly process of the 50S ribosomal subunit. It is not involved in the protein synthesizing functions of that subunit.</text>
</comment>
<comment type="similarity">
    <text evidence="1">Belongs to the bacterial ribosomal protein bL20 family.</text>
</comment>
<evidence type="ECO:0000255" key="1">
    <source>
        <dbReference type="HAMAP-Rule" id="MF_00382"/>
    </source>
</evidence>
<evidence type="ECO:0000305" key="2"/>
<reference key="1">
    <citation type="journal article" date="2006" name="J. Bacteriol.">
        <title>Complete genome sequence of Yersinia pestis strains Antiqua and Nepal516: evidence of gene reduction in an emerging pathogen.</title>
        <authorList>
            <person name="Chain P.S.G."/>
            <person name="Hu P."/>
            <person name="Malfatti S.A."/>
            <person name="Radnedge L."/>
            <person name="Larimer F."/>
            <person name="Vergez L.M."/>
            <person name="Worsham P."/>
            <person name="Chu M.C."/>
            <person name="Andersen G.L."/>
        </authorList>
    </citation>
    <scope>NUCLEOTIDE SEQUENCE [LARGE SCALE GENOMIC DNA]</scope>
    <source>
        <strain>Antiqua</strain>
    </source>
</reference>
<dbReference type="EMBL" id="CP000308">
    <property type="protein sequence ID" value="ABG13741.1"/>
    <property type="molecule type" value="Genomic_DNA"/>
</dbReference>
<dbReference type="RefSeq" id="WP_002211833.1">
    <property type="nucleotide sequence ID" value="NZ_CP009906.1"/>
</dbReference>
<dbReference type="SMR" id="Q1C731"/>
<dbReference type="GeneID" id="96665819"/>
<dbReference type="KEGG" id="ypa:YPA_1775"/>
<dbReference type="Proteomes" id="UP000001971">
    <property type="component" value="Chromosome"/>
</dbReference>
<dbReference type="GO" id="GO:1990904">
    <property type="term" value="C:ribonucleoprotein complex"/>
    <property type="evidence" value="ECO:0007669"/>
    <property type="project" value="UniProtKB-KW"/>
</dbReference>
<dbReference type="GO" id="GO:0005840">
    <property type="term" value="C:ribosome"/>
    <property type="evidence" value="ECO:0007669"/>
    <property type="project" value="UniProtKB-KW"/>
</dbReference>
<dbReference type="GO" id="GO:0019843">
    <property type="term" value="F:rRNA binding"/>
    <property type="evidence" value="ECO:0007669"/>
    <property type="project" value="UniProtKB-UniRule"/>
</dbReference>
<dbReference type="GO" id="GO:0003735">
    <property type="term" value="F:structural constituent of ribosome"/>
    <property type="evidence" value="ECO:0007669"/>
    <property type="project" value="InterPro"/>
</dbReference>
<dbReference type="GO" id="GO:0000027">
    <property type="term" value="P:ribosomal large subunit assembly"/>
    <property type="evidence" value="ECO:0007669"/>
    <property type="project" value="UniProtKB-UniRule"/>
</dbReference>
<dbReference type="GO" id="GO:0006412">
    <property type="term" value="P:translation"/>
    <property type="evidence" value="ECO:0007669"/>
    <property type="project" value="InterPro"/>
</dbReference>
<dbReference type="CDD" id="cd07026">
    <property type="entry name" value="Ribosomal_L20"/>
    <property type="match status" value="1"/>
</dbReference>
<dbReference type="FunFam" id="1.10.1900.20:FF:000001">
    <property type="entry name" value="50S ribosomal protein L20"/>
    <property type="match status" value="1"/>
</dbReference>
<dbReference type="Gene3D" id="6.10.160.10">
    <property type="match status" value="1"/>
</dbReference>
<dbReference type="Gene3D" id="1.10.1900.20">
    <property type="entry name" value="Ribosomal protein L20"/>
    <property type="match status" value="1"/>
</dbReference>
<dbReference type="HAMAP" id="MF_00382">
    <property type="entry name" value="Ribosomal_bL20"/>
    <property type="match status" value="1"/>
</dbReference>
<dbReference type="InterPro" id="IPR005813">
    <property type="entry name" value="Ribosomal_bL20"/>
</dbReference>
<dbReference type="InterPro" id="IPR049946">
    <property type="entry name" value="RIBOSOMAL_L20_CS"/>
</dbReference>
<dbReference type="InterPro" id="IPR035566">
    <property type="entry name" value="Ribosomal_protein_bL20_C"/>
</dbReference>
<dbReference type="NCBIfam" id="TIGR01032">
    <property type="entry name" value="rplT_bact"/>
    <property type="match status" value="1"/>
</dbReference>
<dbReference type="PANTHER" id="PTHR10986">
    <property type="entry name" value="39S RIBOSOMAL PROTEIN L20"/>
    <property type="match status" value="1"/>
</dbReference>
<dbReference type="Pfam" id="PF00453">
    <property type="entry name" value="Ribosomal_L20"/>
    <property type="match status" value="1"/>
</dbReference>
<dbReference type="PRINTS" id="PR00062">
    <property type="entry name" value="RIBOSOMALL20"/>
</dbReference>
<dbReference type="SUPFAM" id="SSF74731">
    <property type="entry name" value="Ribosomal protein L20"/>
    <property type="match status" value="1"/>
</dbReference>
<dbReference type="PROSITE" id="PS00937">
    <property type="entry name" value="RIBOSOMAL_L20"/>
    <property type="match status" value="1"/>
</dbReference>
<keyword id="KW-0687">Ribonucleoprotein</keyword>
<keyword id="KW-0689">Ribosomal protein</keyword>
<keyword id="KW-0694">RNA-binding</keyword>
<keyword id="KW-0699">rRNA-binding</keyword>
<name>RL20_YERPA</name>
<gene>
    <name evidence="1" type="primary">rplT</name>
    <name type="ordered locus">YPA_1775</name>
</gene>
<accession>Q1C731</accession>
<proteinExistence type="inferred from homology"/>
<organism>
    <name type="scientific">Yersinia pestis bv. Antiqua (strain Antiqua)</name>
    <dbReference type="NCBI Taxonomy" id="360102"/>
    <lineage>
        <taxon>Bacteria</taxon>
        <taxon>Pseudomonadati</taxon>
        <taxon>Pseudomonadota</taxon>
        <taxon>Gammaproteobacteria</taxon>
        <taxon>Enterobacterales</taxon>
        <taxon>Yersiniaceae</taxon>
        <taxon>Yersinia</taxon>
    </lineage>
</organism>